<accession>Q8VI21</accession>
<sequence length="196" mass="22205">MNAQCLKKPEEGESSPGTGDKILQRNSLRAISPESSAKLYCCCGVIMVLTVAVVALSVALPATKTEQILINKTYAACPKNWIGVGNKCFYFSEYTSNWTFAQTFCMAQEAQLARFDNEKELNFLKRHMNSSHWIGLHRDSSEHPWRWTDNTEYNNTFLIQGDGECGFLSDNGISSSRDYIPRKWICSRSSNYMLQC</sequence>
<proteinExistence type="inferred from homology"/>
<gene>
    <name type="primary">Clec2f</name>
    <name type="synonym">Clrc</name>
</gene>
<dbReference type="EMBL" id="AF320596">
    <property type="protein sequence ID" value="AAL37197.1"/>
    <property type="molecule type" value="Genomic_DNA"/>
</dbReference>
<dbReference type="SMR" id="Q8VI21"/>
<dbReference type="FunCoup" id="Q8VI21">
    <property type="interactions" value="180"/>
</dbReference>
<dbReference type="GlyCosmos" id="Q8VI21">
    <property type="glycosylation" value="1 site, No reported glycans"/>
</dbReference>
<dbReference type="GlyGen" id="Q8VI21">
    <property type="glycosylation" value="1 site"/>
</dbReference>
<dbReference type="iPTMnet" id="Q8VI21"/>
<dbReference type="PhosphoSitePlus" id="Q8VI21"/>
<dbReference type="ProteomicsDB" id="279100"/>
<dbReference type="AGR" id="MGI:3522133"/>
<dbReference type="MGI" id="MGI:3522133">
    <property type="gene designation" value="Clec2f"/>
</dbReference>
<dbReference type="InParanoid" id="Q8VI21"/>
<dbReference type="PRO" id="PR:Q8VI21"/>
<dbReference type="Proteomes" id="UP000000589">
    <property type="component" value="Unplaced"/>
</dbReference>
<dbReference type="RNAct" id="Q8VI21">
    <property type="molecule type" value="protein"/>
</dbReference>
<dbReference type="GO" id="GO:0005886">
    <property type="term" value="C:plasma membrane"/>
    <property type="evidence" value="ECO:0007669"/>
    <property type="project" value="UniProtKB-SubCell"/>
</dbReference>
<dbReference type="GO" id="GO:0030246">
    <property type="term" value="F:carbohydrate binding"/>
    <property type="evidence" value="ECO:0007669"/>
    <property type="project" value="UniProtKB-KW"/>
</dbReference>
<dbReference type="CDD" id="cd03593">
    <property type="entry name" value="CLECT_NK_receptors_like"/>
    <property type="match status" value="1"/>
</dbReference>
<dbReference type="FunFam" id="3.10.100.10:FF:000062">
    <property type="entry name" value="C-type lectin domain family 2 member D"/>
    <property type="match status" value="1"/>
</dbReference>
<dbReference type="Gene3D" id="3.10.100.10">
    <property type="entry name" value="Mannose-Binding Protein A, subunit A"/>
    <property type="match status" value="1"/>
</dbReference>
<dbReference type="InterPro" id="IPR001304">
    <property type="entry name" value="C-type_lectin-like"/>
</dbReference>
<dbReference type="InterPro" id="IPR016186">
    <property type="entry name" value="C-type_lectin-like/link_sf"/>
</dbReference>
<dbReference type="InterPro" id="IPR050828">
    <property type="entry name" value="C-type_lectin/matrix_domain"/>
</dbReference>
<dbReference type="InterPro" id="IPR016187">
    <property type="entry name" value="CTDL_fold"/>
</dbReference>
<dbReference type="InterPro" id="IPR033992">
    <property type="entry name" value="NKR-like_CTLD"/>
</dbReference>
<dbReference type="PANTHER" id="PTHR45710:SF19">
    <property type="entry name" value="C-TYPE LECTIN DOMAIN FAMILY 2 MEMBER D-RELATED"/>
    <property type="match status" value="1"/>
</dbReference>
<dbReference type="PANTHER" id="PTHR45710">
    <property type="entry name" value="C-TYPE LECTIN DOMAIN-CONTAINING PROTEIN 180"/>
    <property type="match status" value="1"/>
</dbReference>
<dbReference type="Pfam" id="PF00059">
    <property type="entry name" value="Lectin_C"/>
    <property type="match status" value="1"/>
</dbReference>
<dbReference type="SMART" id="SM00034">
    <property type="entry name" value="CLECT"/>
    <property type="match status" value="1"/>
</dbReference>
<dbReference type="SUPFAM" id="SSF56436">
    <property type="entry name" value="C-type lectin-like"/>
    <property type="match status" value="1"/>
</dbReference>
<dbReference type="PROSITE" id="PS50041">
    <property type="entry name" value="C_TYPE_LECTIN_2"/>
    <property type="match status" value="1"/>
</dbReference>
<comment type="function">
    <text evidence="1">Lectin-type cell surface receptor.</text>
</comment>
<comment type="subcellular location">
    <subcellularLocation>
        <location evidence="1">Cell membrane</location>
        <topology evidence="1">Single-pass type II membrane protein</topology>
    </subcellularLocation>
</comment>
<feature type="chain" id="PRO_0000315288" description="C-type lectin domain family 2 member F">
    <location>
        <begin position="1"/>
        <end position="196"/>
    </location>
</feature>
<feature type="topological domain" description="Cytoplasmic" evidence="2">
    <location>
        <begin position="1"/>
        <end position="41"/>
    </location>
</feature>
<feature type="transmembrane region" description="Helical; Signal-anchor for type II membrane protein" evidence="2">
    <location>
        <begin position="42"/>
        <end position="62"/>
    </location>
</feature>
<feature type="topological domain" description="Extracellular" evidence="2">
    <location>
        <begin position="63"/>
        <end position="196"/>
    </location>
</feature>
<feature type="domain" description="C-type lectin" evidence="3">
    <location>
        <begin position="84"/>
        <end position="187"/>
    </location>
</feature>
<feature type="region of interest" description="Disordered" evidence="4">
    <location>
        <begin position="1"/>
        <end position="21"/>
    </location>
</feature>
<feature type="glycosylation site" description="N-linked (GlcNAc...) asparagine" evidence="2">
    <location>
        <position position="97"/>
    </location>
</feature>
<feature type="disulfide bond" evidence="3">
    <location>
        <begin position="77"/>
        <end position="88"/>
    </location>
</feature>
<feature type="disulfide bond" evidence="3">
    <location>
        <begin position="105"/>
        <end position="186"/>
    </location>
</feature>
<organism>
    <name type="scientific">Mus musculus</name>
    <name type="common">Mouse</name>
    <dbReference type="NCBI Taxonomy" id="10090"/>
    <lineage>
        <taxon>Eukaryota</taxon>
        <taxon>Metazoa</taxon>
        <taxon>Chordata</taxon>
        <taxon>Craniata</taxon>
        <taxon>Vertebrata</taxon>
        <taxon>Euteleostomi</taxon>
        <taxon>Mammalia</taxon>
        <taxon>Eutheria</taxon>
        <taxon>Euarchontoglires</taxon>
        <taxon>Glires</taxon>
        <taxon>Rodentia</taxon>
        <taxon>Myomorpha</taxon>
        <taxon>Muroidea</taxon>
        <taxon>Muridae</taxon>
        <taxon>Murinae</taxon>
        <taxon>Mus</taxon>
        <taxon>Mus</taxon>
    </lineage>
</organism>
<reference key="1">
    <citation type="journal article" date="2001" name="Immunogenetics">
        <title>Cloning of Clr, a new family of lectin-like genes localized between mouse Nkrp1a and Cd69.</title>
        <authorList>
            <person name="Plougastel B."/>
            <person name="Dubbelde C."/>
            <person name="Yokoyama W.M."/>
        </authorList>
    </citation>
    <scope>NUCLEOTIDE SEQUENCE [GENOMIC DNA]</scope>
    <source>
        <strain>C57BL/6J</strain>
    </source>
</reference>
<protein>
    <recommendedName>
        <fullName>C-type lectin domain family 2 member F</fullName>
    </recommendedName>
    <alternativeName>
        <fullName>C-type lectin-related protein C</fullName>
        <shortName>Clr-c</shortName>
    </alternativeName>
</protein>
<keyword id="KW-1003">Cell membrane</keyword>
<keyword id="KW-1015">Disulfide bond</keyword>
<keyword id="KW-0325">Glycoprotein</keyword>
<keyword id="KW-0430">Lectin</keyword>
<keyword id="KW-0472">Membrane</keyword>
<keyword id="KW-1185">Reference proteome</keyword>
<keyword id="KW-0735">Signal-anchor</keyword>
<keyword id="KW-0812">Transmembrane</keyword>
<keyword id="KW-1133">Transmembrane helix</keyword>
<name>CLC2F_MOUSE</name>
<evidence type="ECO:0000250" key="1"/>
<evidence type="ECO:0000255" key="2"/>
<evidence type="ECO:0000255" key="3">
    <source>
        <dbReference type="PROSITE-ProRule" id="PRU00040"/>
    </source>
</evidence>
<evidence type="ECO:0000256" key="4">
    <source>
        <dbReference type="SAM" id="MobiDB-lite"/>
    </source>
</evidence>